<keyword id="KW-0597">Phosphoprotein</keyword>
<keyword id="KW-1185">Reference proteome</keyword>
<keyword id="KW-0964">Secreted</keyword>
<keyword id="KW-0732">Signal</keyword>
<dbReference type="EMBL" id="AF220361">
    <property type="protein sequence ID" value="AAF29538.1"/>
    <property type="molecule type" value="Genomic_DNA"/>
</dbReference>
<dbReference type="EMBL" id="AE014296">
    <property type="protein sequence ID" value="AAF49486.2"/>
    <property type="molecule type" value="Genomic_DNA"/>
</dbReference>
<dbReference type="EMBL" id="AY059445">
    <property type="protein sequence ID" value="AAL13351.1"/>
    <property type="molecule type" value="mRNA"/>
</dbReference>
<dbReference type="EMBL" id="AY071682">
    <property type="protein sequence ID" value="AAL49304.1"/>
    <property type="molecule type" value="mRNA"/>
</dbReference>
<dbReference type="EMBL" id="BT025838">
    <property type="protein sequence ID" value="ABF85738.1"/>
    <property type="molecule type" value="mRNA"/>
</dbReference>
<dbReference type="RefSeq" id="NP_524995.2">
    <property type="nucleotide sequence ID" value="NM_080256.4"/>
</dbReference>
<dbReference type="FunCoup" id="Q9VV36">
    <property type="interactions" value="96"/>
</dbReference>
<dbReference type="IntAct" id="Q9VV36">
    <property type="interactions" value="14"/>
</dbReference>
<dbReference type="STRING" id="7227.FBpp0075134"/>
<dbReference type="PaxDb" id="7227-FBpp0075134"/>
<dbReference type="DNASU" id="53564"/>
<dbReference type="EnsemblMetazoa" id="FBtr0075375">
    <property type="protein sequence ID" value="FBpp0075134"/>
    <property type="gene ID" value="FBgn0040074"/>
</dbReference>
<dbReference type="GeneID" id="53564"/>
<dbReference type="KEGG" id="dme:Dmel_CG13057"/>
<dbReference type="UCSC" id="CG13057-RA">
    <property type="organism name" value="d. melanogaster"/>
</dbReference>
<dbReference type="AGR" id="FB:FBgn0040074"/>
<dbReference type="CTD" id="53564"/>
<dbReference type="FlyBase" id="FBgn0040074">
    <property type="gene designation" value="retinin"/>
</dbReference>
<dbReference type="VEuPathDB" id="VectorBase:FBgn0040074"/>
<dbReference type="eggNOG" id="KOG3944">
    <property type="taxonomic scope" value="Eukaryota"/>
</dbReference>
<dbReference type="GeneTree" id="ENSGT00930000151963"/>
<dbReference type="HOGENOM" id="CLU_1397697_0_0_1"/>
<dbReference type="InParanoid" id="Q9VV36"/>
<dbReference type="OMA" id="QTIVHDH"/>
<dbReference type="OrthoDB" id="7883491at2759"/>
<dbReference type="PhylomeDB" id="Q9VV36"/>
<dbReference type="BioGRID-ORCS" id="53564">
    <property type="hits" value="0 hits in 1 CRISPR screen"/>
</dbReference>
<dbReference type="ChiTaRS" id="retinin">
    <property type="organism name" value="fly"/>
</dbReference>
<dbReference type="GenomeRNAi" id="53564"/>
<dbReference type="PRO" id="PR:Q9VV36"/>
<dbReference type="Proteomes" id="UP000000803">
    <property type="component" value="Chromosome 3L"/>
</dbReference>
<dbReference type="Bgee" id="FBgn0040074">
    <property type="expression patterns" value="Expressed in visual pigment cell (sensu Nematoda and Protostomia) in insect head and 73 other cell types or tissues"/>
</dbReference>
<dbReference type="GO" id="GO:0005615">
    <property type="term" value="C:extracellular space"/>
    <property type="evidence" value="ECO:0000314"/>
    <property type="project" value="FlyBase"/>
</dbReference>
<dbReference type="GO" id="GO:0005212">
    <property type="term" value="F:structural constituent of eye lens"/>
    <property type="evidence" value="ECO:0000314"/>
    <property type="project" value="FlyBase"/>
</dbReference>
<dbReference type="InterPro" id="IPR007614">
    <property type="entry name" value="Retinin_C"/>
</dbReference>
<dbReference type="PANTHER" id="PTHR34931">
    <property type="entry name" value="FI02976P-RELATED"/>
    <property type="match status" value="1"/>
</dbReference>
<dbReference type="PANTHER" id="PTHR34931:SF3">
    <property type="entry name" value="FI02976P-RELATED"/>
    <property type="match status" value="1"/>
</dbReference>
<dbReference type="Pfam" id="PF04527">
    <property type="entry name" value="Retinin_C"/>
    <property type="match status" value="1"/>
</dbReference>
<organism evidence="11">
    <name type="scientific">Drosophila melanogaster</name>
    <name type="common">Fruit fly</name>
    <dbReference type="NCBI Taxonomy" id="7227"/>
    <lineage>
        <taxon>Eukaryota</taxon>
        <taxon>Metazoa</taxon>
        <taxon>Ecdysozoa</taxon>
        <taxon>Arthropoda</taxon>
        <taxon>Hexapoda</taxon>
        <taxon>Insecta</taxon>
        <taxon>Pterygota</taxon>
        <taxon>Neoptera</taxon>
        <taxon>Endopterygota</taxon>
        <taxon>Diptera</taxon>
        <taxon>Brachycera</taxon>
        <taxon>Muscomorpha</taxon>
        <taxon>Ephydroidea</taxon>
        <taxon>Drosophilidae</taxon>
        <taxon>Drosophila</taxon>
        <taxon>Sophophora</taxon>
    </lineage>
</organism>
<protein>
    <recommendedName>
        <fullName evidence="5">Retinin</fullName>
    </recommendedName>
</protein>
<proteinExistence type="evidence at protein level"/>
<reference evidence="7" key="1">
    <citation type="journal article" date="1990" name="Proc. Natl. Acad. Sci. U.S.A.">
        <title>Twenty Drosophila visual system cDNA clones: one is a homolog of human arrestin.</title>
        <authorList>
            <person name="Hyde D.R."/>
            <person name="Mecklenburg K.L."/>
            <person name="Pollock J.A."/>
            <person name="Vihtelic T.S."/>
            <person name="Benzer S."/>
        </authorList>
    </citation>
    <scope>NUCLEOTIDE SEQUENCE [GENOMIC DNA / MRNA]</scope>
    <scope>TISSUE SPECIFICITY</scope>
    <scope>DEVELOPMENTAL STAGE</scope>
</reference>
<reference evidence="11" key="2">
    <citation type="journal article" date="2000" name="Science">
        <title>The genome sequence of Drosophila melanogaster.</title>
        <authorList>
            <person name="Adams M.D."/>
            <person name="Celniker S.E."/>
            <person name="Holt R.A."/>
            <person name="Evans C.A."/>
            <person name="Gocayne J.D."/>
            <person name="Amanatides P.G."/>
            <person name="Scherer S.E."/>
            <person name="Li P.W."/>
            <person name="Hoskins R.A."/>
            <person name="Galle R.F."/>
            <person name="George R.A."/>
            <person name="Lewis S.E."/>
            <person name="Richards S."/>
            <person name="Ashburner M."/>
            <person name="Henderson S.N."/>
            <person name="Sutton G.G."/>
            <person name="Wortman J.R."/>
            <person name="Yandell M.D."/>
            <person name="Zhang Q."/>
            <person name="Chen L.X."/>
            <person name="Brandon R.C."/>
            <person name="Rogers Y.-H.C."/>
            <person name="Blazej R.G."/>
            <person name="Champe M."/>
            <person name="Pfeiffer B.D."/>
            <person name="Wan K.H."/>
            <person name="Doyle C."/>
            <person name="Baxter E.G."/>
            <person name="Helt G."/>
            <person name="Nelson C.R."/>
            <person name="Miklos G.L.G."/>
            <person name="Abril J.F."/>
            <person name="Agbayani A."/>
            <person name="An H.-J."/>
            <person name="Andrews-Pfannkoch C."/>
            <person name="Baldwin D."/>
            <person name="Ballew R.M."/>
            <person name="Basu A."/>
            <person name="Baxendale J."/>
            <person name="Bayraktaroglu L."/>
            <person name="Beasley E.M."/>
            <person name="Beeson K.Y."/>
            <person name="Benos P.V."/>
            <person name="Berman B.P."/>
            <person name="Bhandari D."/>
            <person name="Bolshakov S."/>
            <person name="Borkova D."/>
            <person name="Botchan M.R."/>
            <person name="Bouck J."/>
            <person name="Brokstein P."/>
            <person name="Brottier P."/>
            <person name="Burtis K.C."/>
            <person name="Busam D.A."/>
            <person name="Butler H."/>
            <person name="Cadieu E."/>
            <person name="Center A."/>
            <person name="Chandra I."/>
            <person name="Cherry J.M."/>
            <person name="Cawley S."/>
            <person name="Dahlke C."/>
            <person name="Davenport L.B."/>
            <person name="Davies P."/>
            <person name="de Pablos B."/>
            <person name="Delcher A."/>
            <person name="Deng Z."/>
            <person name="Mays A.D."/>
            <person name="Dew I."/>
            <person name="Dietz S.M."/>
            <person name="Dodson K."/>
            <person name="Doup L.E."/>
            <person name="Downes M."/>
            <person name="Dugan-Rocha S."/>
            <person name="Dunkov B.C."/>
            <person name="Dunn P."/>
            <person name="Durbin K.J."/>
            <person name="Evangelista C.C."/>
            <person name="Ferraz C."/>
            <person name="Ferriera S."/>
            <person name="Fleischmann W."/>
            <person name="Fosler C."/>
            <person name="Gabrielian A.E."/>
            <person name="Garg N.S."/>
            <person name="Gelbart W.M."/>
            <person name="Glasser K."/>
            <person name="Glodek A."/>
            <person name="Gong F."/>
            <person name="Gorrell J.H."/>
            <person name="Gu Z."/>
            <person name="Guan P."/>
            <person name="Harris M."/>
            <person name="Harris N.L."/>
            <person name="Harvey D.A."/>
            <person name="Heiman T.J."/>
            <person name="Hernandez J.R."/>
            <person name="Houck J."/>
            <person name="Hostin D."/>
            <person name="Houston K.A."/>
            <person name="Howland T.J."/>
            <person name="Wei M.-H."/>
            <person name="Ibegwam C."/>
            <person name="Jalali M."/>
            <person name="Kalush F."/>
            <person name="Karpen G.H."/>
            <person name="Ke Z."/>
            <person name="Kennison J.A."/>
            <person name="Ketchum K.A."/>
            <person name="Kimmel B.E."/>
            <person name="Kodira C.D."/>
            <person name="Kraft C.L."/>
            <person name="Kravitz S."/>
            <person name="Kulp D."/>
            <person name="Lai Z."/>
            <person name="Lasko P."/>
            <person name="Lei Y."/>
            <person name="Levitsky A.A."/>
            <person name="Li J.H."/>
            <person name="Li Z."/>
            <person name="Liang Y."/>
            <person name="Lin X."/>
            <person name="Liu X."/>
            <person name="Mattei B."/>
            <person name="McIntosh T.C."/>
            <person name="McLeod M.P."/>
            <person name="McPherson D."/>
            <person name="Merkulov G."/>
            <person name="Milshina N.V."/>
            <person name="Mobarry C."/>
            <person name="Morris J."/>
            <person name="Moshrefi A."/>
            <person name="Mount S.M."/>
            <person name="Moy M."/>
            <person name="Murphy B."/>
            <person name="Murphy L."/>
            <person name="Muzny D.M."/>
            <person name="Nelson D.L."/>
            <person name="Nelson D.R."/>
            <person name="Nelson K.A."/>
            <person name="Nixon K."/>
            <person name="Nusskern D.R."/>
            <person name="Pacleb J.M."/>
            <person name="Palazzolo M."/>
            <person name="Pittman G.S."/>
            <person name="Pan S."/>
            <person name="Pollard J."/>
            <person name="Puri V."/>
            <person name="Reese M.G."/>
            <person name="Reinert K."/>
            <person name="Remington K."/>
            <person name="Saunders R.D.C."/>
            <person name="Scheeler F."/>
            <person name="Shen H."/>
            <person name="Shue B.C."/>
            <person name="Siden-Kiamos I."/>
            <person name="Simpson M."/>
            <person name="Skupski M.P."/>
            <person name="Smith T.J."/>
            <person name="Spier E."/>
            <person name="Spradling A.C."/>
            <person name="Stapleton M."/>
            <person name="Strong R."/>
            <person name="Sun E."/>
            <person name="Svirskas R."/>
            <person name="Tector C."/>
            <person name="Turner R."/>
            <person name="Venter E."/>
            <person name="Wang A.H."/>
            <person name="Wang X."/>
            <person name="Wang Z.-Y."/>
            <person name="Wassarman D.A."/>
            <person name="Weinstock G.M."/>
            <person name="Weissenbach J."/>
            <person name="Williams S.M."/>
            <person name="Woodage T."/>
            <person name="Worley K.C."/>
            <person name="Wu D."/>
            <person name="Yang S."/>
            <person name="Yao Q.A."/>
            <person name="Ye J."/>
            <person name="Yeh R.-F."/>
            <person name="Zaveri J.S."/>
            <person name="Zhan M."/>
            <person name="Zhang G."/>
            <person name="Zhao Q."/>
            <person name="Zheng L."/>
            <person name="Zheng X.H."/>
            <person name="Zhong F.N."/>
            <person name="Zhong W."/>
            <person name="Zhou X."/>
            <person name="Zhu S.C."/>
            <person name="Zhu X."/>
            <person name="Smith H.O."/>
            <person name="Gibbs R.A."/>
            <person name="Myers E.W."/>
            <person name="Rubin G.M."/>
            <person name="Venter J.C."/>
        </authorList>
    </citation>
    <scope>NUCLEOTIDE SEQUENCE [LARGE SCALE GENOMIC DNA]</scope>
    <source>
        <strain evidence="11">Berkeley</strain>
    </source>
</reference>
<reference evidence="11" key="3">
    <citation type="journal article" date="2002" name="Genome Biol.">
        <title>Annotation of the Drosophila melanogaster euchromatic genome: a systematic review.</title>
        <authorList>
            <person name="Misra S."/>
            <person name="Crosby M.A."/>
            <person name="Mungall C.J."/>
            <person name="Matthews B.B."/>
            <person name="Campbell K.S."/>
            <person name="Hradecky P."/>
            <person name="Huang Y."/>
            <person name="Kaminker J.S."/>
            <person name="Millburn G.H."/>
            <person name="Prochnik S.E."/>
            <person name="Smith C.D."/>
            <person name="Tupy J.L."/>
            <person name="Whitfield E.J."/>
            <person name="Bayraktaroglu L."/>
            <person name="Berman B.P."/>
            <person name="Bettencourt B.R."/>
            <person name="Celniker S.E."/>
            <person name="de Grey A.D.N.J."/>
            <person name="Drysdale R.A."/>
            <person name="Harris N.L."/>
            <person name="Richter J."/>
            <person name="Russo S."/>
            <person name="Schroeder A.J."/>
            <person name="Shu S.Q."/>
            <person name="Stapleton M."/>
            <person name="Yamada C."/>
            <person name="Ashburner M."/>
            <person name="Gelbart W.M."/>
            <person name="Rubin G.M."/>
            <person name="Lewis S.E."/>
        </authorList>
    </citation>
    <scope>GENOME REANNOTATION</scope>
    <source>
        <strain evidence="11">Berkeley</strain>
    </source>
</reference>
<reference evidence="8" key="4">
    <citation type="journal article" date="2002" name="Genome Biol.">
        <title>A Drosophila full-length cDNA resource.</title>
        <authorList>
            <person name="Stapleton M."/>
            <person name="Carlson J.W."/>
            <person name="Brokstein P."/>
            <person name="Yu C."/>
            <person name="Champe M."/>
            <person name="George R.A."/>
            <person name="Guarin H."/>
            <person name="Kronmiller B."/>
            <person name="Pacleb J.M."/>
            <person name="Park S."/>
            <person name="Wan K.H."/>
            <person name="Rubin G.M."/>
            <person name="Celniker S.E."/>
        </authorList>
    </citation>
    <scope>NUCLEOTIDE SEQUENCE [LARGE SCALE MRNA]</scope>
    <source>
        <strain evidence="8">Berkeley</strain>
        <tissue evidence="8">Head</tissue>
    </source>
</reference>
<reference evidence="9" key="5">
    <citation type="submission" date="2006-06" db="EMBL/GenBank/DDBJ databases">
        <authorList>
            <person name="Stapleton M."/>
            <person name="Carlson J."/>
            <person name="Chavez C."/>
            <person name="Frise E."/>
            <person name="George R."/>
            <person name="Pacleb J."/>
            <person name="Park S."/>
            <person name="Wan K."/>
            <person name="Yu C."/>
            <person name="Celniker S."/>
        </authorList>
    </citation>
    <scope>NUCLEOTIDE SEQUENCE [LARGE SCALE MRNA]</scope>
</reference>
<reference evidence="6" key="6">
    <citation type="journal article" date="2008" name="Insect Mol. Biol.">
        <title>Characterization of the Drosophila melanogaster retinin gene encoding a cornea-specific protein.</title>
        <authorList>
            <person name="Kim E."/>
            <person name="Choi Y."/>
            <person name="Lee S."/>
            <person name="Seo Y."/>
            <person name="Yoon J."/>
            <person name="Baek K."/>
        </authorList>
    </citation>
    <scope>IDENTIFICATION BY MASS SPECTROMETRY</scope>
    <scope>SUBCELLULAR LOCATION</scope>
    <scope>TISSUE SPECIFICITY</scope>
    <scope>DEVELOPMENTAL STAGE</scope>
    <scope>PHOSPHORYLATION</scope>
    <scope>DISRUPTION PHENOTYPE</scope>
</reference>
<sequence length="191" mass="20004">MSRLFLPVLAIVLVSIGASHTASLEWPSNLVALSSVKSSQLLPIASEDSVELADGSSGSVSSSAAQPEDQSQEEAEEQQVSSASSGSADPISGRLVSAGIPVSVPLPLILAARNGLRTVLTIQEPAVAKVGEVVQHVPTAVSHQTQTVVHDHRRLVTPIVAPAVRTTQVIRQQPPLLWSVASDPRVVLIRN</sequence>
<comment type="subcellular location">
    <subcellularLocation>
        <location evidence="3">Secreted</location>
    </subcellularLocation>
</comment>
<comment type="tissue specificity">
    <text evidence="3 4">Specifically expressed in cornea (at protein level) (PubMed:18828839). Detected in retina and cortex (PubMed:2105491).</text>
</comment>
<comment type="developmental stage">
    <text evidence="3 4">Detected from late pupal stage onwards.</text>
</comment>
<comment type="PTM">
    <text evidence="3">Phosphorylated.</text>
</comment>
<comment type="disruption phenotype">
    <text evidence="3">RNAi-mediated knockdown has no visible phenotype.</text>
</comment>
<feature type="signal peptide" evidence="1">
    <location>
        <begin position="1"/>
        <end position="21"/>
    </location>
</feature>
<feature type="chain" id="PRO_5008974705" description="Retinin" evidence="1">
    <location>
        <begin position="22"/>
        <end position="191"/>
    </location>
</feature>
<feature type="region of interest" description="Disordered" evidence="2">
    <location>
        <begin position="52"/>
        <end position="88"/>
    </location>
</feature>
<feature type="compositionally biased region" description="Low complexity" evidence="2">
    <location>
        <begin position="55"/>
        <end position="69"/>
    </location>
</feature>
<feature type="compositionally biased region" description="Low complexity" evidence="2">
    <location>
        <begin position="78"/>
        <end position="88"/>
    </location>
</feature>
<feature type="sequence conflict" description="In Ref. 4; AAL49304." evidence="6" ref="4">
    <location>
        <position position="46"/>
    </location>
</feature>
<feature type="sequence conflict" description="In Ref. 1; AAF29538." evidence="6" ref="1">
    <original>S</original>
    <variation>A</variation>
    <location>
        <position position="59"/>
    </location>
</feature>
<accession>Q9VV36</accession>
<accession>Q8SYA5</accession>
<accession>Q95TE5</accession>
<accession>Q9N2Q4</accession>
<evidence type="ECO:0000255" key="1"/>
<evidence type="ECO:0000256" key="2">
    <source>
        <dbReference type="SAM" id="MobiDB-lite"/>
    </source>
</evidence>
<evidence type="ECO:0000269" key="3">
    <source>
    </source>
</evidence>
<evidence type="ECO:0000269" key="4">
    <source>
    </source>
</evidence>
<evidence type="ECO:0000303" key="5">
    <source>
    </source>
</evidence>
<evidence type="ECO:0000305" key="6"/>
<evidence type="ECO:0000312" key="7">
    <source>
        <dbReference type="EMBL" id="AAF29538.1"/>
    </source>
</evidence>
<evidence type="ECO:0000312" key="8">
    <source>
        <dbReference type="EMBL" id="AAL13351.1"/>
    </source>
</evidence>
<evidence type="ECO:0000312" key="9">
    <source>
        <dbReference type="EMBL" id="ABF85738.1"/>
    </source>
</evidence>
<evidence type="ECO:0000312" key="10">
    <source>
        <dbReference type="FlyBase" id="FBgn0040074"/>
    </source>
</evidence>
<evidence type="ECO:0000312" key="11">
    <source>
        <dbReference type="Proteomes" id="UP000000803"/>
    </source>
</evidence>
<gene>
    <name evidence="5 10" type="primary">retinin</name>
    <name evidence="10" type="ORF">CG13057</name>
</gene>
<name>RETIN_DROME</name>